<comment type="function">
    <text evidence="1">Probably functions as a manganese efflux pump.</text>
</comment>
<comment type="subcellular location">
    <subcellularLocation>
        <location evidence="1">Cell membrane</location>
        <topology evidence="1">Multi-pass membrane protein</topology>
    </subcellularLocation>
</comment>
<comment type="similarity">
    <text evidence="1">Belongs to the MntP (TC 9.B.29) family.</text>
</comment>
<proteinExistence type="inferred from homology"/>
<dbReference type="EMBL" id="CP000559">
    <property type="protein sequence ID" value="ABN06397.1"/>
    <property type="molecule type" value="Genomic_DNA"/>
</dbReference>
<dbReference type="RefSeq" id="WP_011832598.1">
    <property type="nucleotide sequence ID" value="NC_008942.1"/>
</dbReference>
<dbReference type="STRING" id="410358.Mlab_0221"/>
<dbReference type="GeneID" id="4795668"/>
<dbReference type="KEGG" id="mla:Mlab_0221"/>
<dbReference type="eggNOG" id="arCOG04898">
    <property type="taxonomic scope" value="Archaea"/>
</dbReference>
<dbReference type="HOGENOM" id="CLU_096410_3_0_2"/>
<dbReference type="OrthoDB" id="53356at2157"/>
<dbReference type="Proteomes" id="UP000000365">
    <property type="component" value="Chromosome"/>
</dbReference>
<dbReference type="GO" id="GO:0005886">
    <property type="term" value="C:plasma membrane"/>
    <property type="evidence" value="ECO:0007669"/>
    <property type="project" value="UniProtKB-SubCell"/>
</dbReference>
<dbReference type="GO" id="GO:0005384">
    <property type="term" value="F:manganese ion transmembrane transporter activity"/>
    <property type="evidence" value="ECO:0007669"/>
    <property type="project" value="UniProtKB-UniRule"/>
</dbReference>
<dbReference type="HAMAP" id="MF_01521">
    <property type="entry name" value="MntP_pump"/>
    <property type="match status" value="1"/>
</dbReference>
<dbReference type="InterPro" id="IPR003810">
    <property type="entry name" value="Mntp/YtaF"/>
</dbReference>
<dbReference type="InterPro" id="IPR022929">
    <property type="entry name" value="Put_MntP"/>
</dbReference>
<dbReference type="PANTHER" id="PTHR35529">
    <property type="entry name" value="MANGANESE EFFLUX PUMP MNTP-RELATED"/>
    <property type="match status" value="1"/>
</dbReference>
<dbReference type="PANTHER" id="PTHR35529:SF1">
    <property type="entry name" value="MANGANESE EFFLUX PUMP MNTP-RELATED"/>
    <property type="match status" value="1"/>
</dbReference>
<dbReference type="Pfam" id="PF02659">
    <property type="entry name" value="Mntp"/>
    <property type="match status" value="1"/>
</dbReference>
<accession>A2SPZ1</accession>
<evidence type="ECO:0000255" key="1">
    <source>
        <dbReference type="HAMAP-Rule" id="MF_01521"/>
    </source>
</evidence>
<sequence>MTDLLLSSLVIAVGLAMDSFSVSLAGGAALKDNIVKTAVTAGIFFGFFQFAMPLLGWGIGVPITQVIDPFGYWIVVGLFFFIGGKMIWDSFSGDEEGISLIGWKVLLLLAVATSIDALAVGISFALIGEAVLLPAVIIGVVAFLFSFFGVLAGHKLSSILGNKMQILGGVILVLIGIKFLIEYCL</sequence>
<keyword id="KW-1003">Cell membrane</keyword>
<keyword id="KW-0406">Ion transport</keyword>
<keyword id="KW-0464">Manganese</keyword>
<keyword id="KW-0472">Membrane</keyword>
<keyword id="KW-1185">Reference proteome</keyword>
<keyword id="KW-0812">Transmembrane</keyword>
<keyword id="KW-1133">Transmembrane helix</keyword>
<keyword id="KW-0813">Transport</keyword>
<protein>
    <recommendedName>
        <fullName evidence="1">Putative manganese efflux pump MntP</fullName>
    </recommendedName>
</protein>
<feature type="chain" id="PRO_0000292548" description="Putative manganese efflux pump MntP">
    <location>
        <begin position="1"/>
        <end position="185"/>
    </location>
</feature>
<feature type="transmembrane region" description="Helical" evidence="1">
    <location>
        <begin position="4"/>
        <end position="24"/>
    </location>
</feature>
<feature type="transmembrane region" description="Helical" evidence="1">
    <location>
        <begin position="43"/>
        <end position="63"/>
    </location>
</feature>
<feature type="transmembrane region" description="Helical" evidence="1">
    <location>
        <begin position="67"/>
        <end position="87"/>
    </location>
</feature>
<feature type="transmembrane region" description="Helical" evidence="1">
    <location>
        <begin position="107"/>
        <end position="127"/>
    </location>
</feature>
<feature type="transmembrane region" description="Helical" evidence="1">
    <location>
        <begin position="131"/>
        <end position="151"/>
    </location>
</feature>
<feature type="transmembrane region" description="Helical" evidence="1">
    <location>
        <begin position="165"/>
        <end position="185"/>
    </location>
</feature>
<reference key="1">
    <citation type="journal article" date="2009" name="Stand. Genomic Sci.">
        <title>Complete genome sequence of Methanocorpusculum labreanum type strain Z.</title>
        <authorList>
            <person name="Anderson I.J."/>
            <person name="Sieprawska-Lupa M."/>
            <person name="Goltsman E."/>
            <person name="Lapidus A."/>
            <person name="Copeland A."/>
            <person name="Glavina Del Rio T."/>
            <person name="Tice H."/>
            <person name="Dalin E."/>
            <person name="Barry K."/>
            <person name="Pitluck S."/>
            <person name="Hauser L."/>
            <person name="Land M."/>
            <person name="Lucas S."/>
            <person name="Richardson P."/>
            <person name="Whitman W.B."/>
            <person name="Kyrpides N.C."/>
        </authorList>
    </citation>
    <scope>NUCLEOTIDE SEQUENCE [LARGE SCALE GENOMIC DNA]</scope>
    <source>
        <strain>ATCC 43576 / DSM 4855 / Z</strain>
    </source>
</reference>
<name>MNTP_METLZ</name>
<gene>
    <name evidence="1" type="primary">mntP</name>
    <name type="ordered locus">Mlab_0221</name>
</gene>
<organism>
    <name type="scientific">Methanocorpusculum labreanum (strain ATCC 43576 / DSM 4855 / Z)</name>
    <dbReference type="NCBI Taxonomy" id="410358"/>
    <lineage>
        <taxon>Archaea</taxon>
        <taxon>Methanobacteriati</taxon>
        <taxon>Methanobacteriota</taxon>
        <taxon>Stenosarchaea group</taxon>
        <taxon>Methanomicrobia</taxon>
        <taxon>Methanomicrobiales</taxon>
        <taxon>Methanocorpusculaceae</taxon>
        <taxon>Methanocorpusculum</taxon>
    </lineage>
</organism>